<accession>P0DKK7</accession>
<accession>Q0J0I3</accession>
<proteinExistence type="evidence at transcript level"/>
<name>RL7A2_ORYSJ</name>
<sequence>MAPKRGGRAPVPAKKKTEKVTNPLFEKRPKQFGIGGALPPKKDLHRFVKWPKVVRIQRQRRILKQRLKVPPALNQFTRTLDKNLATNLFKMLLKYRPEDKAAKKERLLKRAQAEAEGKTVEAKKPIVVKYGLNHVTYLIEQSKAQLVVIAHDVDPIELVVWLPALCRKMEVPYCIVKGKARLGSIVHKKTASVLCLTTVKNEDKLEFSKILEAIKANFNDKFDEVRKKWGGGVMGSKSQAKTKAREKLLAKEAAQRMT</sequence>
<keyword id="KW-1185">Reference proteome</keyword>
<keyword id="KW-0687">Ribonucleoprotein</keyword>
<keyword id="KW-0689">Ribosomal protein</keyword>
<protein>
    <recommendedName>
        <fullName evidence="2">Large ribosomal subunit protein eL8y</fullName>
    </recommendedName>
    <alternativeName>
        <fullName>60S ribosomal protein L7a-2</fullName>
    </alternativeName>
</protein>
<feature type="chain" id="PRO_0000436227" description="Large ribosomal subunit protein eL8y">
    <location>
        <begin position="1"/>
        <end position="258"/>
    </location>
</feature>
<feature type="region of interest" description="Disordered" evidence="1">
    <location>
        <begin position="1"/>
        <end position="20"/>
    </location>
</feature>
<comment type="similarity">
    <text evidence="2">Belongs to the eukaryotic ribosomal protein eL8 family.</text>
</comment>
<reference key="1">
    <citation type="journal article" date="2005" name="Nature">
        <title>The map-based sequence of the rice genome.</title>
        <authorList>
            <consortium name="International rice genome sequencing project (IRGSP)"/>
        </authorList>
    </citation>
    <scope>NUCLEOTIDE SEQUENCE [LARGE SCALE GENOMIC DNA]</scope>
    <source>
        <strain>cv. Nipponbare</strain>
    </source>
</reference>
<reference key="2">
    <citation type="journal article" date="2008" name="Nucleic Acids Res.">
        <title>The rice annotation project database (RAP-DB): 2008 update.</title>
        <authorList>
            <consortium name="The rice annotation project (RAP)"/>
        </authorList>
    </citation>
    <scope>GENOME REANNOTATION</scope>
    <source>
        <strain>cv. Nipponbare</strain>
    </source>
</reference>
<reference key="3">
    <citation type="journal article" date="2013" name="Rice">
        <title>Improvement of the Oryza sativa Nipponbare reference genome using next generation sequence and optical map data.</title>
        <authorList>
            <person name="Kawahara Y."/>
            <person name="de la Bastide M."/>
            <person name="Hamilton J.P."/>
            <person name="Kanamori H."/>
            <person name="McCombie W.R."/>
            <person name="Ouyang S."/>
            <person name="Schwartz D.C."/>
            <person name="Tanaka T."/>
            <person name="Wu J."/>
            <person name="Zhou S."/>
            <person name="Childs K.L."/>
            <person name="Davidson R.M."/>
            <person name="Lin H."/>
            <person name="Quesada-Ocampo L."/>
            <person name="Vaillancourt B."/>
            <person name="Sakai H."/>
            <person name="Lee S.S."/>
            <person name="Kim J."/>
            <person name="Numa H."/>
            <person name="Itoh T."/>
            <person name="Buell C.R."/>
            <person name="Matsumoto T."/>
        </authorList>
    </citation>
    <scope>GENOME REANNOTATION</scope>
    <source>
        <strain>cv. Nipponbare</strain>
    </source>
</reference>
<reference key="4">
    <citation type="journal article" date="2005" name="PLoS Biol.">
        <title>The genomes of Oryza sativa: a history of duplications.</title>
        <authorList>
            <person name="Yu J."/>
            <person name="Wang J."/>
            <person name="Lin W."/>
            <person name="Li S."/>
            <person name="Li H."/>
            <person name="Zhou J."/>
            <person name="Ni P."/>
            <person name="Dong W."/>
            <person name="Hu S."/>
            <person name="Zeng C."/>
            <person name="Zhang J."/>
            <person name="Zhang Y."/>
            <person name="Li R."/>
            <person name="Xu Z."/>
            <person name="Li S."/>
            <person name="Li X."/>
            <person name="Zheng H."/>
            <person name="Cong L."/>
            <person name="Lin L."/>
            <person name="Yin J."/>
            <person name="Geng J."/>
            <person name="Li G."/>
            <person name="Shi J."/>
            <person name="Liu J."/>
            <person name="Lv H."/>
            <person name="Li J."/>
            <person name="Wang J."/>
            <person name="Deng Y."/>
            <person name="Ran L."/>
            <person name="Shi X."/>
            <person name="Wang X."/>
            <person name="Wu Q."/>
            <person name="Li C."/>
            <person name="Ren X."/>
            <person name="Wang J."/>
            <person name="Wang X."/>
            <person name="Li D."/>
            <person name="Liu D."/>
            <person name="Zhang X."/>
            <person name="Ji Z."/>
            <person name="Zhao W."/>
            <person name="Sun Y."/>
            <person name="Zhang Z."/>
            <person name="Bao J."/>
            <person name="Han Y."/>
            <person name="Dong L."/>
            <person name="Ji J."/>
            <person name="Chen P."/>
            <person name="Wu S."/>
            <person name="Liu J."/>
            <person name="Xiao Y."/>
            <person name="Bu D."/>
            <person name="Tan J."/>
            <person name="Yang L."/>
            <person name="Ye C."/>
            <person name="Zhang J."/>
            <person name="Xu J."/>
            <person name="Zhou Y."/>
            <person name="Yu Y."/>
            <person name="Zhang B."/>
            <person name="Zhuang S."/>
            <person name="Wei H."/>
            <person name="Liu B."/>
            <person name="Lei M."/>
            <person name="Yu H."/>
            <person name="Li Y."/>
            <person name="Xu H."/>
            <person name="Wei S."/>
            <person name="He X."/>
            <person name="Fang L."/>
            <person name="Zhang Z."/>
            <person name="Zhang Y."/>
            <person name="Huang X."/>
            <person name="Su Z."/>
            <person name="Tong W."/>
            <person name="Li J."/>
            <person name="Tong Z."/>
            <person name="Li S."/>
            <person name="Ye J."/>
            <person name="Wang L."/>
            <person name="Fang L."/>
            <person name="Lei T."/>
            <person name="Chen C.-S."/>
            <person name="Chen H.-C."/>
            <person name="Xu Z."/>
            <person name="Li H."/>
            <person name="Huang H."/>
            <person name="Zhang F."/>
            <person name="Xu H."/>
            <person name="Li N."/>
            <person name="Zhao C."/>
            <person name="Li S."/>
            <person name="Dong L."/>
            <person name="Huang Y."/>
            <person name="Li L."/>
            <person name="Xi Y."/>
            <person name="Qi Q."/>
            <person name="Li W."/>
            <person name="Zhang B."/>
            <person name="Hu W."/>
            <person name="Zhang Y."/>
            <person name="Tian X."/>
            <person name="Jiao Y."/>
            <person name="Liang X."/>
            <person name="Jin J."/>
            <person name="Gao L."/>
            <person name="Zheng W."/>
            <person name="Hao B."/>
            <person name="Liu S.-M."/>
            <person name="Wang W."/>
            <person name="Yuan L."/>
            <person name="Cao M."/>
            <person name="McDermott J."/>
            <person name="Samudrala R."/>
            <person name="Wang J."/>
            <person name="Wong G.K.-S."/>
            <person name="Yang H."/>
        </authorList>
    </citation>
    <scope>NUCLEOTIDE SEQUENCE [LARGE SCALE GENOMIC DNA]</scope>
    <source>
        <strain>cv. Nipponbare</strain>
    </source>
</reference>
<reference key="5">
    <citation type="journal article" date="2003" name="Science">
        <title>Collection, mapping, and annotation of over 28,000 cDNA clones from japonica rice.</title>
        <authorList>
            <consortium name="The rice full-length cDNA consortium"/>
        </authorList>
    </citation>
    <scope>NUCLEOTIDE SEQUENCE [LARGE SCALE MRNA]</scope>
    <source>
        <strain>cv. Nipponbare</strain>
    </source>
</reference>
<gene>
    <name type="primary">RPL7A-2</name>
    <name evidence="3" type="ordered locus">Os09g0507800</name>
    <name evidence="2" type="ordered locus">LOC_Os09g32976</name>
    <name evidence="4" type="ORF">OsJ_29953</name>
</gene>
<organism evidence="5">
    <name type="scientific">Oryza sativa subsp. japonica</name>
    <name type="common">Rice</name>
    <dbReference type="NCBI Taxonomy" id="39947"/>
    <lineage>
        <taxon>Eukaryota</taxon>
        <taxon>Viridiplantae</taxon>
        <taxon>Streptophyta</taxon>
        <taxon>Embryophyta</taxon>
        <taxon>Tracheophyta</taxon>
        <taxon>Spermatophyta</taxon>
        <taxon>Magnoliopsida</taxon>
        <taxon>Liliopsida</taxon>
        <taxon>Poales</taxon>
        <taxon>Poaceae</taxon>
        <taxon>BOP clade</taxon>
        <taxon>Oryzoideae</taxon>
        <taxon>Oryzeae</taxon>
        <taxon>Oryzinae</taxon>
        <taxon>Oryza</taxon>
        <taxon>Oryza sativa</taxon>
    </lineage>
</organism>
<evidence type="ECO:0000256" key="1">
    <source>
        <dbReference type="SAM" id="MobiDB-lite"/>
    </source>
</evidence>
<evidence type="ECO:0000305" key="2"/>
<evidence type="ECO:0000312" key="3">
    <source>
        <dbReference type="EMBL" id="BAT08880.1"/>
    </source>
</evidence>
<evidence type="ECO:0000312" key="4">
    <source>
        <dbReference type="EMBL" id="EAZ45310.1"/>
    </source>
</evidence>
<evidence type="ECO:0000312" key="5">
    <source>
        <dbReference type="Proteomes" id="UP000059680"/>
    </source>
</evidence>
<dbReference type="EMBL" id="AP008215">
    <property type="protein sequence ID" value="BAF25532.1"/>
    <property type="molecule type" value="Genomic_DNA"/>
</dbReference>
<dbReference type="EMBL" id="AP014965">
    <property type="protein sequence ID" value="BAT08880.1"/>
    <property type="molecule type" value="Genomic_DNA"/>
</dbReference>
<dbReference type="EMBL" id="CM000146">
    <property type="protein sequence ID" value="EAZ45310.1"/>
    <property type="molecule type" value="Genomic_DNA"/>
</dbReference>
<dbReference type="EMBL" id="AK061725">
    <property type="protein sequence ID" value="BAG88071.1"/>
    <property type="molecule type" value="mRNA"/>
</dbReference>
<dbReference type="RefSeq" id="XP_015611976.1">
    <property type="nucleotide sequence ID" value="XM_015756490.1"/>
</dbReference>
<dbReference type="RefSeq" id="XP_015650875.1">
    <property type="nucleotide sequence ID" value="XM_015795389.1"/>
</dbReference>
<dbReference type="SMR" id="P0DKK7"/>
<dbReference type="FunCoup" id="P0DKK7">
    <property type="interactions" value="2637"/>
</dbReference>
<dbReference type="STRING" id="39947.P0DKK7"/>
<dbReference type="PaxDb" id="39947-P0DKK7"/>
<dbReference type="EnsemblPlants" id="Os08t0326400-01">
    <property type="protein sequence ID" value="Os08t0326400-01"/>
    <property type="gene ID" value="Os08g0326400"/>
</dbReference>
<dbReference type="EnsemblPlants" id="Os09t0507800-01">
    <property type="protein sequence ID" value="Os09t0507800-01"/>
    <property type="gene ID" value="Os09g0507800"/>
</dbReference>
<dbReference type="Gramene" id="Os08t0326400-01">
    <property type="protein sequence ID" value="Os08t0326400-01"/>
    <property type="gene ID" value="Os08g0326400"/>
</dbReference>
<dbReference type="Gramene" id="Os09t0507800-01">
    <property type="protein sequence ID" value="Os09t0507800-01"/>
    <property type="gene ID" value="Os09g0507800"/>
</dbReference>
<dbReference type="KEGG" id="dosa:Os09g0507800"/>
<dbReference type="InParanoid" id="P0DKK7"/>
<dbReference type="OrthoDB" id="1882850at2759"/>
<dbReference type="Proteomes" id="UP000000763">
    <property type="component" value="Chromosome 9"/>
</dbReference>
<dbReference type="Proteomes" id="UP000007752">
    <property type="component" value="Chromosome 9"/>
</dbReference>
<dbReference type="Proteomes" id="UP000059680">
    <property type="component" value="Chromosome 9"/>
</dbReference>
<dbReference type="ExpressionAtlas" id="P0DKK7">
    <property type="expression patterns" value="baseline and differential"/>
</dbReference>
<dbReference type="GO" id="GO:0022625">
    <property type="term" value="C:cytosolic large ribosomal subunit"/>
    <property type="evidence" value="ECO:0000318"/>
    <property type="project" value="GO_Central"/>
</dbReference>
<dbReference type="GO" id="GO:0003723">
    <property type="term" value="F:RNA binding"/>
    <property type="evidence" value="ECO:0000318"/>
    <property type="project" value="GO_Central"/>
</dbReference>
<dbReference type="GO" id="GO:0000470">
    <property type="term" value="P:maturation of LSU-rRNA"/>
    <property type="evidence" value="ECO:0000318"/>
    <property type="project" value="GO_Central"/>
</dbReference>
<dbReference type="FunFam" id="3.30.1330.30:FF:000003">
    <property type="entry name" value="60S ribosomal protein L7a"/>
    <property type="match status" value="1"/>
</dbReference>
<dbReference type="Gene3D" id="3.30.1330.30">
    <property type="match status" value="1"/>
</dbReference>
<dbReference type="InterPro" id="IPR050257">
    <property type="entry name" value="eL8/uL1-like"/>
</dbReference>
<dbReference type="InterPro" id="IPR029064">
    <property type="entry name" value="Ribosomal_eL30-like_sf"/>
</dbReference>
<dbReference type="InterPro" id="IPR004037">
    <property type="entry name" value="Ribosomal_eL8-like_CS"/>
</dbReference>
<dbReference type="InterPro" id="IPR004038">
    <property type="entry name" value="Ribosomal_eL8/eL30/eS12/Gad45"/>
</dbReference>
<dbReference type="InterPro" id="IPR018492">
    <property type="entry name" value="Ribosomal_eL8/Nhp2"/>
</dbReference>
<dbReference type="InterPro" id="IPR001921">
    <property type="entry name" value="Ribosomal_eL8_euk"/>
</dbReference>
<dbReference type="PANTHER" id="PTHR23105">
    <property type="entry name" value="RIBOSOMAL PROTEIN L7AE FAMILY MEMBER"/>
    <property type="match status" value="1"/>
</dbReference>
<dbReference type="Pfam" id="PF01248">
    <property type="entry name" value="Ribosomal_L7Ae"/>
    <property type="match status" value="1"/>
</dbReference>
<dbReference type="PRINTS" id="PR00881">
    <property type="entry name" value="L7ARS6FAMILY"/>
</dbReference>
<dbReference type="PRINTS" id="PR00882">
    <property type="entry name" value="RIBOSOMALL7A"/>
</dbReference>
<dbReference type="SUPFAM" id="SSF55315">
    <property type="entry name" value="L30e-like"/>
    <property type="match status" value="1"/>
</dbReference>
<dbReference type="PROSITE" id="PS01082">
    <property type="entry name" value="RIBOSOMAL_L7AE"/>
    <property type="match status" value="1"/>
</dbReference>